<evidence type="ECO:0000255" key="1">
    <source>
        <dbReference type="HAMAP-Rule" id="MF_00091"/>
    </source>
</evidence>
<keyword id="KW-0071">Autoinducer synthesis</keyword>
<keyword id="KW-0408">Iron</keyword>
<keyword id="KW-0456">Lyase</keyword>
<keyword id="KW-0479">Metal-binding</keyword>
<keyword id="KW-0673">Quorum sensing</keyword>
<reference key="1">
    <citation type="journal article" date="2005" name="Nucleic Acids Res.">
        <title>Genome dynamics and diversity of Shigella species, the etiologic agents of bacillary dysentery.</title>
        <authorList>
            <person name="Yang F."/>
            <person name="Yang J."/>
            <person name="Zhang X."/>
            <person name="Chen L."/>
            <person name="Jiang Y."/>
            <person name="Yan Y."/>
            <person name="Tang X."/>
            <person name="Wang J."/>
            <person name="Xiong Z."/>
            <person name="Dong J."/>
            <person name="Xue Y."/>
            <person name="Zhu Y."/>
            <person name="Xu X."/>
            <person name="Sun L."/>
            <person name="Chen S."/>
            <person name="Nie H."/>
            <person name="Peng J."/>
            <person name="Xu J."/>
            <person name="Wang Y."/>
            <person name="Yuan Z."/>
            <person name="Wen Y."/>
            <person name="Yao Z."/>
            <person name="Shen Y."/>
            <person name="Qiang B."/>
            <person name="Hou Y."/>
            <person name="Yu J."/>
            <person name="Jin Q."/>
        </authorList>
    </citation>
    <scope>NUCLEOTIDE SEQUENCE [LARGE SCALE GENOMIC DNA]</scope>
    <source>
        <strain>Sb227</strain>
    </source>
</reference>
<sequence>MPLLDSFTVDHTRMEAPAVRVAKTMNTPHGDAITVFDLRFCVPNKEVMPERGSHTLEHLFAGFMRNHLNGNGVEIIDISPMGCRTGFYMSLIGTPDEQRVADAWKAAMEDVLKVQDQNQIPELNVYQCGTYQMHSLQEAQDIARSILERDVRINSNEELALPKEKLQELHI</sequence>
<comment type="function">
    <text evidence="1">Involved in the synthesis of autoinducer 2 (AI-2) which is secreted by bacteria and is used to communicate both the cell density and the metabolic potential of the environment. The regulation of gene expression in response to changes in cell density is called quorum sensing. Catalyzes the transformation of S-ribosylhomocysteine (RHC) to homocysteine (HC) and 4,5-dihydroxy-2,3-pentadione (DPD).</text>
</comment>
<comment type="catalytic activity">
    <reaction evidence="1">
        <text>S-(5-deoxy-D-ribos-5-yl)-L-homocysteine = (S)-4,5-dihydroxypentane-2,3-dione + L-homocysteine</text>
        <dbReference type="Rhea" id="RHEA:17753"/>
        <dbReference type="ChEBI" id="CHEBI:29484"/>
        <dbReference type="ChEBI" id="CHEBI:58195"/>
        <dbReference type="ChEBI" id="CHEBI:58199"/>
        <dbReference type="EC" id="4.4.1.21"/>
    </reaction>
</comment>
<comment type="cofactor">
    <cofactor evidence="1">
        <name>Fe cation</name>
        <dbReference type="ChEBI" id="CHEBI:24875"/>
    </cofactor>
    <text evidence="1">Binds 1 Fe cation per subunit.</text>
</comment>
<comment type="subunit">
    <text evidence="1">Homodimer.</text>
</comment>
<comment type="similarity">
    <text evidence="1">Belongs to the LuxS family.</text>
</comment>
<organism>
    <name type="scientific">Shigella boydii serotype 4 (strain Sb227)</name>
    <dbReference type="NCBI Taxonomy" id="300268"/>
    <lineage>
        <taxon>Bacteria</taxon>
        <taxon>Pseudomonadati</taxon>
        <taxon>Pseudomonadota</taxon>
        <taxon>Gammaproteobacteria</taxon>
        <taxon>Enterobacterales</taxon>
        <taxon>Enterobacteriaceae</taxon>
        <taxon>Shigella</taxon>
    </lineage>
</organism>
<proteinExistence type="inferred from homology"/>
<accession>Q31X57</accession>
<dbReference type="EC" id="4.4.1.21" evidence="1"/>
<dbReference type="EMBL" id="CP000036">
    <property type="protein sequence ID" value="ABB67351.1"/>
    <property type="molecule type" value="Genomic_DNA"/>
</dbReference>
<dbReference type="RefSeq" id="WP_001130216.1">
    <property type="nucleotide sequence ID" value="NC_007613.1"/>
</dbReference>
<dbReference type="SMR" id="Q31X57"/>
<dbReference type="KEGG" id="sbo:SBO_2830"/>
<dbReference type="HOGENOM" id="CLU_107531_2_0_6"/>
<dbReference type="Proteomes" id="UP000007067">
    <property type="component" value="Chromosome"/>
</dbReference>
<dbReference type="GO" id="GO:0005506">
    <property type="term" value="F:iron ion binding"/>
    <property type="evidence" value="ECO:0007669"/>
    <property type="project" value="InterPro"/>
</dbReference>
<dbReference type="GO" id="GO:0043768">
    <property type="term" value="F:S-ribosylhomocysteine lyase activity"/>
    <property type="evidence" value="ECO:0007669"/>
    <property type="project" value="UniProtKB-UniRule"/>
</dbReference>
<dbReference type="GO" id="GO:0009372">
    <property type="term" value="P:quorum sensing"/>
    <property type="evidence" value="ECO:0007669"/>
    <property type="project" value="UniProtKB-UniRule"/>
</dbReference>
<dbReference type="FunFam" id="3.30.1360.80:FF:000001">
    <property type="entry name" value="S-ribosylhomocysteine lyase"/>
    <property type="match status" value="1"/>
</dbReference>
<dbReference type="Gene3D" id="3.30.1360.80">
    <property type="entry name" value="S-ribosylhomocysteinase (LuxS)"/>
    <property type="match status" value="1"/>
</dbReference>
<dbReference type="HAMAP" id="MF_00091">
    <property type="entry name" value="LuxS"/>
    <property type="match status" value="1"/>
</dbReference>
<dbReference type="InterPro" id="IPR037005">
    <property type="entry name" value="LuxS_sf"/>
</dbReference>
<dbReference type="InterPro" id="IPR011249">
    <property type="entry name" value="Metalloenz_LuxS/M16"/>
</dbReference>
<dbReference type="InterPro" id="IPR003815">
    <property type="entry name" value="S-ribosylhomocysteinase"/>
</dbReference>
<dbReference type="NCBIfam" id="NF002602">
    <property type="entry name" value="PRK02260.1-2"/>
    <property type="match status" value="1"/>
</dbReference>
<dbReference type="PANTHER" id="PTHR35799">
    <property type="entry name" value="S-RIBOSYLHOMOCYSTEINE LYASE"/>
    <property type="match status" value="1"/>
</dbReference>
<dbReference type="PANTHER" id="PTHR35799:SF1">
    <property type="entry name" value="S-RIBOSYLHOMOCYSTEINE LYASE"/>
    <property type="match status" value="1"/>
</dbReference>
<dbReference type="Pfam" id="PF02664">
    <property type="entry name" value="LuxS"/>
    <property type="match status" value="1"/>
</dbReference>
<dbReference type="PIRSF" id="PIRSF006160">
    <property type="entry name" value="AI2"/>
    <property type="match status" value="1"/>
</dbReference>
<dbReference type="PRINTS" id="PR01487">
    <property type="entry name" value="LUXSPROTEIN"/>
</dbReference>
<dbReference type="SUPFAM" id="SSF63411">
    <property type="entry name" value="LuxS/MPP-like metallohydrolase"/>
    <property type="match status" value="1"/>
</dbReference>
<name>LUXS_SHIBS</name>
<protein>
    <recommendedName>
        <fullName evidence="1">S-ribosylhomocysteine lyase</fullName>
        <ecNumber evidence="1">4.4.1.21</ecNumber>
    </recommendedName>
    <alternativeName>
        <fullName evidence="1">AI-2 synthesis protein</fullName>
    </alternativeName>
    <alternativeName>
        <fullName evidence="1">Autoinducer-2 production protein LuxS</fullName>
    </alternativeName>
</protein>
<gene>
    <name evidence="1" type="primary">luxS</name>
    <name type="ordered locus">SBO_2830</name>
</gene>
<feature type="chain" id="PRO_0000298030" description="S-ribosylhomocysteine lyase">
    <location>
        <begin position="1"/>
        <end position="171"/>
    </location>
</feature>
<feature type="binding site" evidence="1">
    <location>
        <position position="54"/>
    </location>
    <ligand>
        <name>Fe cation</name>
        <dbReference type="ChEBI" id="CHEBI:24875"/>
    </ligand>
</feature>
<feature type="binding site" evidence="1">
    <location>
        <position position="58"/>
    </location>
    <ligand>
        <name>Fe cation</name>
        <dbReference type="ChEBI" id="CHEBI:24875"/>
    </ligand>
</feature>
<feature type="binding site" evidence="1">
    <location>
        <position position="128"/>
    </location>
    <ligand>
        <name>Fe cation</name>
        <dbReference type="ChEBI" id="CHEBI:24875"/>
    </ligand>
</feature>